<gene>
    <name type="primary">Evi5</name>
    <name type="ORF">CG11727</name>
</gene>
<name>EVI5_DROME</name>
<comment type="function">
    <text evidence="6">Functions as a GTPase-activating protein (GAP). During border cell migration in the ovary, acts as a GAP for Rab11 and is necessary for the maintenance of active receptor tyrosine kinases at the leading edge.</text>
</comment>
<comment type="subunit">
    <text evidence="6">Interacts with Rab11.</text>
</comment>
<comment type="subcellular location">
    <subcellularLocation>
        <location evidence="6">Cytoplasm</location>
    </subcellularLocation>
    <subcellularLocation>
        <location evidence="6">Endosome</location>
    </subcellularLocation>
</comment>
<comment type="alternative products">
    <event type="alternative splicing"/>
    <isoform>
        <id>Q9VYY9-1</id>
        <name>A</name>
        <sequence type="displayed"/>
    </isoform>
    <isoform>
        <id>Q9VYY9-3</id>
        <name>C</name>
        <name>E</name>
        <sequence type="described" ref="VSP_047764 VSP_037210"/>
    </isoform>
    <isoform>
        <id>Q9VYY9-4</id>
        <name>D</name>
        <sequence type="described" ref="VSP_047764"/>
    </isoform>
    <isoform>
        <id>Q9VYY9-2</id>
        <name>B</name>
        <sequence type="described" ref="VSP_037210"/>
    </isoform>
</comment>
<evidence type="ECO:0000255" key="1"/>
<evidence type="ECO:0000255" key="2">
    <source>
        <dbReference type="PROSITE-ProRule" id="PRU00163"/>
    </source>
</evidence>
<evidence type="ECO:0000256" key="3">
    <source>
        <dbReference type="SAM" id="MobiDB-lite"/>
    </source>
</evidence>
<evidence type="ECO:0000269" key="4">
    <source>
    </source>
</evidence>
<evidence type="ECO:0000269" key="5">
    <source>
    </source>
</evidence>
<evidence type="ECO:0000269" key="6">
    <source>
    </source>
</evidence>
<evidence type="ECO:0000303" key="7">
    <source>
    </source>
</evidence>
<evidence type="ECO:0000303" key="8">
    <source ref="4"/>
</evidence>
<evidence type="ECO:0000305" key="9"/>
<protein>
    <recommendedName>
        <fullName>Ecotropic viral integration site 5 ortholog</fullName>
    </recommendedName>
</protein>
<reference key="1">
    <citation type="journal article" date="2000" name="Science">
        <title>The genome sequence of Drosophila melanogaster.</title>
        <authorList>
            <person name="Adams M.D."/>
            <person name="Celniker S.E."/>
            <person name="Holt R.A."/>
            <person name="Evans C.A."/>
            <person name="Gocayne J.D."/>
            <person name="Amanatides P.G."/>
            <person name="Scherer S.E."/>
            <person name="Li P.W."/>
            <person name="Hoskins R.A."/>
            <person name="Galle R.F."/>
            <person name="George R.A."/>
            <person name="Lewis S.E."/>
            <person name="Richards S."/>
            <person name="Ashburner M."/>
            <person name="Henderson S.N."/>
            <person name="Sutton G.G."/>
            <person name="Wortman J.R."/>
            <person name="Yandell M.D."/>
            <person name="Zhang Q."/>
            <person name="Chen L.X."/>
            <person name="Brandon R.C."/>
            <person name="Rogers Y.-H.C."/>
            <person name="Blazej R.G."/>
            <person name="Champe M."/>
            <person name="Pfeiffer B.D."/>
            <person name="Wan K.H."/>
            <person name="Doyle C."/>
            <person name="Baxter E.G."/>
            <person name="Helt G."/>
            <person name="Nelson C.R."/>
            <person name="Miklos G.L.G."/>
            <person name="Abril J.F."/>
            <person name="Agbayani A."/>
            <person name="An H.-J."/>
            <person name="Andrews-Pfannkoch C."/>
            <person name="Baldwin D."/>
            <person name="Ballew R.M."/>
            <person name="Basu A."/>
            <person name="Baxendale J."/>
            <person name="Bayraktaroglu L."/>
            <person name="Beasley E.M."/>
            <person name="Beeson K.Y."/>
            <person name="Benos P.V."/>
            <person name="Berman B.P."/>
            <person name="Bhandari D."/>
            <person name="Bolshakov S."/>
            <person name="Borkova D."/>
            <person name="Botchan M.R."/>
            <person name="Bouck J."/>
            <person name="Brokstein P."/>
            <person name="Brottier P."/>
            <person name="Burtis K.C."/>
            <person name="Busam D.A."/>
            <person name="Butler H."/>
            <person name="Cadieu E."/>
            <person name="Center A."/>
            <person name="Chandra I."/>
            <person name="Cherry J.M."/>
            <person name="Cawley S."/>
            <person name="Dahlke C."/>
            <person name="Davenport L.B."/>
            <person name="Davies P."/>
            <person name="de Pablos B."/>
            <person name="Delcher A."/>
            <person name="Deng Z."/>
            <person name="Mays A.D."/>
            <person name="Dew I."/>
            <person name="Dietz S.M."/>
            <person name="Dodson K."/>
            <person name="Doup L.E."/>
            <person name="Downes M."/>
            <person name="Dugan-Rocha S."/>
            <person name="Dunkov B.C."/>
            <person name="Dunn P."/>
            <person name="Durbin K.J."/>
            <person name="Evangelista C.C."/>
            <person name="Ferraz C."/>
            <person name="Ferriera S."/>
            <person name="Fleischmann W."/>
            <person name="Fosler C."/>
            <person name="Gabrielian A.E."/>
            <person name="Garg N.S."/>
            <person name="Gelbart W.M."/>
            <person name="Glasser K."/>
            <person name="Glodek A."/>
            <person name="Gong F."/>
            <person name="Gorrell J.H."/>
            <person name="Gu Z."/>
            <person name="Guan P."/>
            <person name="Harris M."/>
            <person name="Harris N.L."/>
            <person name="Harvey D.A."/>
            <person name="Heiman T.J."/>
            <person name="Hernandez J.R."/>
            <person name="Houck J."/>
            <person name="Hostin D."/>
            <person name="Houston K.A."/>
            <person name="Howland T.J."/>
            <person name="Wei M.-H."/>
            <person name="Ibegwam C."/>
            <person name="Jalali M."/>
            <person name="Kalush F."/>
            <person name="Karpen G.H."/>
            <person name="Ke Z."/>
            <person name="Kennison J.A."/>
            <person name="Ketchum K.A."/>
            <person name="Kimmel B.E."/>
            <person name="Kodira C.D."/>
            <person name="Kraft C.L."/>
            <person name="Kravitz S."/>
            <person name="Kulp D."/>
            <person name="Lai Z."/>
            <person name="Lasko P."/>
            <person name="Lei Y."/>
            <person name="Levitsky A.A."/>
            <person name="Li J.H."/>
            <person name="Li Z."/>
            <person name="Liang Y."/>
            <person name="Lin X."/>
            <person name="Liu X."/>
            <person name="Mattei B."/>
            <person name="McIntosh T.C."/>
            <person name="McLeod M.P."/>
            <person name="McPherson D."/>
            <person name="Merkulov G."/>
            <person name="Milshina N.V."/>
            <person name="Mobarry C."/>
            <person name="Morris J."/>
            <person name="Moshrefi A."/>
            <person name="Mount S.M."/>
            <person name="Moy M."/>
            <person name="Murphy B."/>
            <person name="Murphy L."/>
            <person name="Muzny D.M."/>
            <person name="Nelson D.L."/>
            <person name="Nelson D.R."/>
            <person name="Nelson K.A."/>
            <person name="Nixon K."/>
            <person name="Nusskern D.R."/>
            <person name="Pacleb J.M."/>
            <person name="Palazzolo M."/>
            <person name="Pittman G.S."/>
            <person name="Pan S."/>
            <person name="Pollard J."/>
            <person name="Puri V."/>
            <person name="Reese M.G."/>
            <person name="Reinert K."/>
            <person name="Remington K."/>
            <person name="Saunders R.D.C."/>
            <person name="Scheeler F."/>
            <person name="Shen H."/>
            <person name="Shue B.C."/>
            <person name="Siden-Kiamos I."/>
            <person name="Simpson M."/>
            <person name="Skupski M.P."/>
            <person name="Smith T.J."/>
            <person name="Spier E."/>
            <person name="Spradling A.C."/>
            <person name="Stapleton M."/>
            <person name="Strong R."/>
            <person name="Sun E."/>
            <person name="Svirskas R."/>
            <person name="Tector C."/>
            <person name="Turner R."/>
            <person name="Venter E."/>
            <person name="Wang A.H."/>
            <person name="Wang X."/>
            <person name="Wang Z.-Y."/>
            <person name="Wassarman D.A."/>
            <person name="Weinstock G.M."/>
            <person name="Weissenbach J."/>
            <person name="Williams S.M."/>
            <person name="Woodage T."/>
            <person name="Worley K.C."/>
            <person name="Wu D."/>
            <person name="Yang S."/>
            <person name="Yao Q.A."/>
            <person name="Ye J."/>
            <person name="Yeh R.-F."/>
            <person name="Zaveri J.S."/>
            <person name="Zhan M."/>
            <person name="Zhang G."/>
            <person name="Zhao Q."/>
            <person name="Zheng L."/>
            <person name="Zheng X.H."/>
            <person name="Zhong F.N."/>
            <person name="Zhong W."/>
            <person name="Zhou X."/>
            <person name="Zhu S.C."/>
            <person name="Zhu X."/>
            <person name="Smith H.O."/>
            <person name="Gibbs R.A."/>
            <person name="Myers E.W."/>
            <person name="Rubin G.M."/>
            <person name="Venter J.C."/>
        </authorList>
    </citation>
    <scope>NUCLEOTIDE SEQUENCE [LARGE SCALE GENOMIC DNA]</scope>
    <source>
        <strain>Berkeley</strain>
    </source>
</reference>
<reference key="2">
    <citation type="journal article" date="2002" name="Genome Biol.">
        <title>Annotation of the Drosophila melanogaster euchromatic genome: a systematic review.</title>
        <authorList>
            <person name="Misra S."/>
            <person name="Crosby M.A."/>
            <person name="Mungall C.J."/>
            <person name="Matthews B.B."/>
            <person name="Campbell K.S."/>
            <person name="Hradecky P."/>
            <person name="Huang Y."/>
            <person name="Kaminker J.S."/>
            <person name="Millburn G.H."/>
            <person name="Prochnik S.E."/>
            <person name="Smith C.D."/>
            <person name="Tupy J.L."/>
            <person name="Whitfield E.J."/>
            <person name="Bayraktaroglu L."/>
            <person name="Berman B.P."/>
            <person name="Bettencourt B.R."/>
            <person name="Celniker S.E."/>
            <person name="de Grey A.D.N.J."/>
            <person name="Drysdale R.A."/>
            <person name="Harris N.L."/>
            <person name="Richter J."/>
            <person name="Russo S."/>
            <person name="Schroeder A.J."/>
            <person name="Shu S.Q."/>
            <person name="Stapleton M."/>
            <person name="Yamada C."/>
            <person name="Ashburner M."/>
            <person name="Gelbart W.M."/>
            <person name="Rubin G.M."/>
            <person name="Lewis S.E."/>
        </authorList>
    </citation>
    <scope>GENOME REANNOTATION</scope>
    <scope>ALTERNATIVE SPLICING</scope>
    <source>
        <strain>Berkeley</strain>
    </source>
</reference>
<reference key="3">
    <citation type="journal article" date="2002" name="Genome Biol.">
        <title>A Drosophila full-length cDNA resource.</title>
        <authorList>
            <person name="Stapleton M."/>
            <person name="Carlson J.W."/>
            <person name="Brokstein P."/>
            <person name="Yu C."/>
            <person name="Champe M."/>
            <person name="George R.A."/>
            <person name="Guarin H."/>
            <person name="Kronmiller B."/>
            <person name="Pacleb J.M."/>
            <person name="Park S."/>
            <person name="Wan K.H."/>
            <person name="Rubin G.M."/>
            <person name="Celniker S.E."/>
        </authorList>
    </citation>
    <scope>NUCLEOTIDE SEQUENCE [LARGE SCALE MRNA] (ISOFORM B)</scope>
    <source>
        <strain>Berkeley</strain>
        <tissue>Head</tissue>
    </source>
</reference>
<reference key="4">
    <citation type="submission" date="2009-10" db="EMBL/GenBank/DDBJ databases">
        <authorList>
            <person name="Carlson J."/>
            <person name="Booth B."/>
            <person name="Frise E."/>
            <person name="Park S."/>
            <person name="Sandler J."/>
            <person name="Wan K."/>
            <person name="Yu C."/>
            <person name="Celniker S."/>
        </authorList>
    </citation>
    <scope>NUCLEOTIDE SEQUENCE [LARGE SCALE MRNA] (ISOFORM C)</scope>
    <scope>NUCLEOTIDE SEQUENCE [LARGE SCALE MRNA] OF 375-807 (ISOFORM D)</scope>
</reference>
<reference key="5">
    <citation type="journal article" date="2007" name="Mol. Biosyst.">
        <title>An integrated chemical, mass spectrometric and computational strategy for (quantitative) phosphoproteomics: application to Drosophila melanogaster Kc167 cells.</title>
        <authorList>
            <person name="Bodenmiller B."/>
            <person name="Mueller L.N."/>
            <person name="Pedrioli P.G.A."/>
            <person name="Pflieger D."/>
            <person name="Juenger M.A."/>
            <person name="Eng J.K."/>
            <person name="Aebersold R."/>
            <person name="Tao W.A."/>
        </authorList>
    </citation>
    <scope>PHOSPHORYLATION [LARGE SCALE ANALYSIS] AT THR-33</scope>
    <scope>IDENTIFICATION BY MASS SPECTROMETRY</scope>
</reference>
<reference key="6">
    <citation type="journal article" date="2008" name="J. Proteome Res.">
        <title>Phosphoproteome analysis of Drosophila melanogaster embryos.</title>
        <authorList>
            <person name="Zhai B."/>
            <person name="Villen J."/>
            <person name="Beausoleil S.A."/>
            <person name="Mintseris J."/>
            <person name="Gygi S.P."/>
        </authorList>
    </citation>
    <scope>PHOSPHORYLATION [LARGE SCALE ANALYSIS] AT SER-58 AND SER-64</scope>
    <scope>IDENTIFICATION BY MASS SPECTROMETRY</scope>
    <source>
        <tissue>Embryo</tissue>
    </source>
</reference>
<reference key="7">
    <citation type="journal article" date="2012" name="J. Cell Biol.">
        <title>Evi5 promotes collective cell migration through its Rab-GAP activity.</title>
        <authorList>
            <person name="Laflamme C."/>
            <person name="Assaker G."/>
            <person name="Ramel D."/>
            <person name="Dorn J.F."/>
            <person name="She D."/>
            <person name="Maddox P.S."/>
            <person name="Emery G."/>
        </authorList>
    </citation>
    <scope>FUNCTION</scope>
    <scope>INTERACTION WITH RAB11</scope>
    <scope>SUBCELLULAR LOCATION</scope>
    <scope>MUTAGENESIS OF ARG-160</scope>
</reference>
<feature type="chain" id="PRO_0000372854" description="Ecotropic viral integration site 5 ortholog">
    <location>
        <begin position="1"/>
        <end position="807"/>
    </location>
</feature>
<feature type="domain" description="Rab-GAP TBC" evidence="2">
    <location>
        <begin position="116"/>
        <end position="300"/>
    </location>
</feature>
<feature type="region of interest" description="Disordered" evidence="3">
    <location>
        <begin position="1"/>
        <end position="31"/>
    </location>
</feature>
<feature type="coiled-coil region" evidence="1">
    <location>
        <begin position="352"/>
        <end position="463"/>
    </location>
</feature>
<feature type="coiled-coil region" evidence="1">
    <location>
        <begin position="494"/>
        <end position="583"/>
    </location>
</feature>
<feature type="coiled-coil region" evidence="1">
    <location>
        <begin position="627"/>
        <end position="772"/>
    </location>
</feature>
<feature type="modified residue" description="Phosphothreonine" evidence="4">
    <location>
        <position position="33"/>
    </location>
</feature>
<feature type="modified residue" description="Phosphoserine" evidence="5">
    <location>
        <position position="58"/>
    </location>
</feature>
<feature type="modified residue" description="Phosphoserine" evidence="5">
    <location>
        <position position="64"/>
    </location>
</feature>
<feature type="splice variant" id="VSP_047764" description="In isoform C and isoform D." evidence="8">
    <location>
        <begin position="463"/>
        <end position="468"/>
    </location>
</feature>
<feature type="splice variant" id="VSP_037210" description="In isoform B and isoform C." evidence="7 8">
    <original>LTALKSRGKFPGAKLRSSSIQSIESTEIDFNDLNMVRRGSTELST</original>
    <variation>YPTPITSPDTEPWKWIS</variation>
    <location>
        <begin position="763"/>
        <end position="807"/>
    </location>
</feature>
<feature type="mutagenesis site" description="Does not affect subcellular location or interaction with Rab11. Fails to inactivate Rab11." evidence="6">
    <original>R</original>
    <variation>A</variation>
    <location>
        <position position="160"/>
    </location>
</feature>
<feature type="sequence conflict" description="In Ref. 4; ADY17733." evidence="9" ref="4">
    <original>A</original>
    <variation>D</variation>
    <location>
        <position position="507"/>
    </location>
</feature>
<accession>Q9VYY9</accession>
<accession>C9QP48</accession>
<accession>E1JJH7</accession>
<accession>F0JAJ2</accession>
<accession>Q8IR89</accession>
<accession>Q8MT90</accession>
<accession>Q95S00</accession>
<sequence length="807" mass="92782">MTLTTTTTASSAESQAKMDVKGGALPGEENLPTSEMDLLAKLEAANKLIESDAKSLNSLHSTHSRKNSDTSQISLTSSGNSVAEEDIWTTWATILNDWEGALKRKNPCVSELVRRGIPHHFRAIVWQQLSGASDGDKKQYAEYIKATSACEKVIRRDIARTYPEVEFFKEKDGPGQEALFNVIKAYSLHDREVGYCQGSGFIVGLLLMQMPEEEAFAVLVQIMQQHRMRHMFKPSMSELGLCMYQLENLVQEQIPDMHIHFQQQGFQTTMYASSWFLTLYTTTLNVNLSCRIMDVFLSEGMEFIFKVALALLLTGKDTLLCLDMEAMLKFFQKELPGRVEADVEGFFNLAYSIKLNTKRMKKMEKEYQDLKKKEQEEMAELRRLRRENCLLKQRNELLEAESAELADRLVRGQVSRAEEEETSYAIQTELMQLRRSYLEVSHQLENANEEVRGLSLRLQENNVSIDSNNSRQSSIDELCMKEEALKQRDEMVSCLLEELVKVRQGLAESEDQIRNLKAKVEELEEDKKTLRETTPDNSVAHLQDELIASKLREAEASLSLKDLKQRVQELSSQWQRQLAENQRSESERTTNAVDSTPKKLLTNFFDSSKSSEHTQKLEEELMTTRIREMETLTELKELRLKVMELETQVQVSTNQLRRQDEEHKKLKEELEMAVTREKDMSNKAREQQHRYSDLESRMKDELMNVKIKFTEQSQTVAELKQEISRLETKNSEMLAEGELRANLDDSDKVRDLQDRLADMKAELTALKSRGKFPGAKLRSSSIQSIESTEIDFNDLNMVRRGSTELST</sequence>
<proteinExistence type="evidence at protein level"/>
<dbReference type="EMBL" id="AE014298">
    <property type="protein sequence ID" value="AAN09633.2"/>
    <property type="molecule type" value="Genomic_DNA"/>
</dbReference>
<dbReference type="EMBL" id="AE014298">
    <property type="protein sequence ID" value="AAF48044.3"/>
    <property type="molecule type" value="Genomic_DNA"/>
</dbReference>
<dbReference type="EMBL" id="AE014298">
    <property type="protein sequence ID" value="ACZ95256.1"/>
    <property type="molecule type" value="Genomic_DNA"/>
</dbReference>
<dbReference type="EMBL" id="AE014298">
    <property type="protein sequence ID" value="ACZ95257.1"/>
    <property type="molecule type" value="Genomic_DNA"/>
</dbReference>
<dbReference type="EMBL" id="AE014298">
    <property type="protein sequence ID" value="AGB95293.1"/>
    <property type="molecule type" value="Genomic_DNA"/>
</dbReference>
<dbReference type="EMBL" id="AY061021">
    <property type="protein sequence ID" value="AAL28569.1"/>
    <property type="molecule type" value="mRNA"/>
</dbReference>
<dbReference type="EMBL" id="AY118309">
    <property type="protein sequence ID" value="AAM48338.1"/>
    <property type="molecule type" value="mRNA"/>
</dbReference>
<dbReference type="EMBL" id="BT099930">
    <property type="protein sequence ID" value="ACX36506.1"/>
    <property type="molecule type" value="mRNA"/>
</dbReference>
<dbReference type="EMBL" id="BT099932">
    <property type="protein sequence ID" value="ACX36508.1"/>
    <property type="molecule type" value="mRNA"/>
</dbReference>
<dbReference type="EMBL" id="BT126034">
    <property type="protein sequence ID" value="ADY17733.1"/>
    <property type="molecule type" value="mRNA"/>
</dbReference>
<dbReference type="RefSeq" id="NP_001162721.1">
    <molecule id="Q9VYY9-3"/>
    <property type="nucleotide sequence ID" value="NM_001169250.2"/>
</dbReference>
<dbReference type="RefSeq" id="NP_001162722.1">
    <molecule id="Q9VYY9-4"/>
    <property type="nucleotide sequence ID" value="NM_001169251.4"/>
</dbReference>
<dbReference type="RefSeq" id="NP_001259450.1">
    <molecule id="Q9VYY9-3"/>
    <property type="nucleotide sequence ID" value="NM_001272521.1"/>
</dbReference>
<dbReference type="RefSeq" id="NP_572716.3">
    <molecule id="Q9VYY9-2"/>
    <property type="nucleotide sequence ID" value="NM_132488.5"/>
</dbReference>
<dbReference type="RefSeq" id="NP_727526.2">
    <molecule id="Q9VYY9-1"/>
    <property type="nucleotide sequence ID" value="NM_167285.4"/>
</dbReference>
<dbReference type="SMR" id="Q9VYY9"/>
<dbReference type="BioGRID" id="58499">
    <property type="interactions" value="5"/>
</dbReference>
<dbReference type="FunCoup" id="Q9VYY9">
    <property type="interactions" value="1154"/>
</dbReference>
<dbReference type="IntAct" id="Q9VYY9">
    <property type="interactions" value="4"/>
</dbReference>
<dbReference type="STRING" id="7227.FBpp0073392"/>
<dbReference type="iPTMnet" id="Q9VYY9"/>
<dbReference type="PaxDb" id="7227-FBpp0073392"/>
<dbReference type="DNASU" id="32088"/>
<dbReference type="EnsemblMetazoa" id="FBtr0073546">
    <molecule id="Q9VYY9-2"/>
    <property type="protein sequence ID" value="FBpp0073391"/>
    <property type="gene ID" value="FBgn0262740"/>
</dbReference>
<dbReference type="EnsemblMetazoa" id="FBtr0073547">
    <molecule id="Q9VYY9-1"/>
    <property type="protein sequence ID" value="FBpp0073392"/>
    <property type="gene ID" value="FBgn0262740"/>
</dbReference>
<dbReference type="EnsemblMetazoa" id="FBtr0300732">
    <molecule id="Q9VYY9-3"/>
    <property type="protein sequence ID" value="FBpp0289956"/>
    <property type="gene ID" value="FBgn0262740"/>
</dbReference>
<dbReference type="EnsemblMetazoa" id="FBtr0300733">
    <molecule id="Q9VYY9-4"/>
    <property type="protein sequence ID" value="FBpp0289957"/>
    <property type="gene ID" value="FBgn0262740"/>
</dbReference>
<dbReference type="EnsemblMetazoa" id="FBtr0332620">
    <molecule id="Q9VYY9-3"/>
    <property type="protein sequence ID" value="FBpp0304866"/>
    <property type="gene ID" value="FBgn0262740"/>
</dbReference>
<dbReference type="GeneID" id="32088"/>
<dbReference type="KEGG" id="dme:Dmel_CG11727"/>
<dbReference type="UCSC" id="CG11727-RA">
    <molecule id="Q9VYY9-1"/>
    <property type="organism name" value="d. melanogaster"/>
</dbReference>
<dbReference type="UCSC" id="CG11727-RB">
    <property type="organism name" value="d. melanogaster"/>
</dbReference>
<dbReference type="AGR" id="FB:FBgn0262740"/>
<dbReference type="CTD" id="7813"/>
<dbReference type="FlyBase" id="FBgn0262740">
    <property type="gene designation" value="Evi5"/>
</dbReference>
<dbReference type="VEuPathDB" id="VectorBase:FBgn0262740"/>
<dbReference type="eggNOG" id="KOG4436">
    <property type="taxonomic scope" value="Eukaryota"/>
</dbReference>
<dbReference type="GeneTree" id="ENSGT00940000169844"/>
<dbReference type="InParanoid" id="Q9VYY9"/>
<dbReference type="OMA" id="LWGHIVA"/>
<dbReference type="OrthoDB" id="295078at2759"/>
<dbReference type="PhylomeDB" id="Q9VYY9"/>
<dbReference type="SignaLink" id="Q9VYY9"/>
<dbReference type="BioGRID-ORCS" id="32088">
    <property type="hits" value="0 hits in 3 CRISPR screens"/>
</dbReference>
<dbReference type="GenomeRNAi" id="32088"/>
<dbReference type="PRO" id="PR:Q9VYY9"/>
<dbReference type="Proteomes" id="UP000000803">
    <property type="component" value="Chromosome X"/>
</dbReference>
<dbReference type="Bgee" id="FBgn0262740">
    <property type="expression patterns" value="Expressed in dorsal appendage forming follicle cell in ovary and 284 other cell types or tissues"/>
</dbReference>
<dbReference type="GO" id="GO:0005737">
    <property type="term" value="C:cytoplasm"/>
    <property type="evidence" value="ECO:0000314"/>
    <property type="project" value="UniProtKB"/>
</dbReference>
<dbReference type="GO" id="GO:0005768">
    <property type="term" value="C:endosome"/>
    <property type="evidence" value="ECO:0007669"/>
    <property type="project" value="UniProtKB-SubCell"/>
</dbReference>
<dbReference type="GO" id="GO:0005794">
    <property type="term" value="C:Golgi apparatus"/>
    <property type="evidence" value="ECO:0000314"/>
    <property type="project" value="FlyBase"/>
</dbReference>
<dbReference type="GO" id="GO:0031982">
    <property type="term" value="C:vesicle"/>
    <property type="evidence" value="ECO:0000314"/>
    <property type="project" value="UniProtKB"/>
</dbReference>
<dbReference type="GO" id="GO:0005096">
    <property type="term" value="F:GTPase activator activity"/>
    <property type="evidence" value="ECO:0000314"/>
    <property type="project" value="UniProtKB"/>
</dbReference>
<dbReference type="GO" id="GO:0031267">
    <property type="term" value="F:small GTPase binding"/>
    <property type="evidence" value="ECO:0000353"/>
    <property type="project" value="UniProtKB"/>
</dbReference>
<dbReference type="GO" id="GO:0030334">
    <property type="term" value="P:regulation of cell migration"/>
    <property type="evidence" value="ECO:0000314"/>
    <property type="project" value="UniProtKB"/>
</dbReference>
<dbReference type="GO" id="GO:0032880">
    <property type="term" value="P:regulation of protein localization"/>
    <property type="evidence" value="ECO:0000314"/>
    <property type="project" value="UniProtKB"/>
</dbReference>
<dbReference type="FunFam" id="1.10.472.80:FF:000002">
    <property type="entry name" value="Ecotropic viral integration site 5"/>
    <property type="match status" value="1"/>
</dbReference>
<dbReference type="FunFam" id="1.10.8.270:FF:000003">
    <property type="entry name" value="Ecotropic viral integration site 5"/>
    <property type="match status" value="1"/>
</dbReference>
<dbReference type="Gene3D" id="1.10.8.270">
    <property type="entry name" value="putative rabgap domain of human tbc1 domain family member 14 like domains"/>
    <property type="match status" value="1"/>
</dbReference>
<dbReference type="Gene3D" id="1.10.10.750">
    <property type="entry name" value="Ypt/Rab-GAP domain of gyp1p, domain 1"/>
    <property type="match status" value="1"/>
</dbReference>
<dbReference type="Gene3D" id="1.10.472.80">
    <property type="entry name" value="Ypt/Rab-GAP domain of gyp1p, domain 3"/>
    <property type="match status" value="1"/>
</dbReference>
<dbReference type="InterPro" id="IPR000195">
    <property type="entry name" value="Rab-GAP-TBC_dom"/>
</dbReference>
<dbReference type="InterPro" id="IPR035969">
    <property type="entry name" value="Rab-GAP_TBC_sf"/>
</dbReference>
<dbReference type="InterPro" id="IPR050302">
    <property type="entry name" value="Rab_GAP_TBC_domain"/>
</dbReference>
<dbReference type="PANTHER" id="PTHR47219">
    <property type="entry name" value="RAB GTPASE-ACTIVATING PROTEIN 1-LIKE"/>
    <property type="match status" value="1"/>
</dbReference>
<dbReference type="PANTHER" id="PTHR47219:SF22">
    <property type="entry name" value="RAB-GAP TBC DOMAIN-CONTAINING PROTEIN"/>
    <property type="match status" value="1"/>
</dbReference>
<dbReference type="Pfam" id="PF00566">
    <property type="entry name" value="RabGAP-TBC"/>
    <property type="match status" value="1"/>
</dbReference>
<dbReference type="SMART" id="SM00164">
    <property type="entry name" value="TBC"/>
    <property type="match status" value="1"/>
</dbReference>
<dbReference type="SUPFAM" id="SSF47923">
    <property type="entry name" value="Ypt/Rab-GAP domain of gyp1p"/>
    <property type="match status" value="2"/>
</dbReference>
<dbReference type="PROSITE" id="PS50086">
    <property type="entry name" value="TBC_RABGAP"/>
    <property type="match status" value="1"/>
</dbReference>
<keyword id="KW-0025">Alternative splicing</keyword>
<keyword id="KW-0175">Coiled coil</keyword>
<keyword id="KW-0963">Cytoplasm</keyword>
<keyword id="KW-0967">Endosome</keyword>
<keyword id="KW-0343">GTPase activation</keyword>
<keyword id="KW-0597">Phosphoprotein</keyword>
<keyword id="KW-1185">Reference proteome</keyword>
<organism>
    <name type="scientific">Drosophila melanogaster</name>
    <name type="common">Fruit fly</name>
    <dbReference type="NCBI Taxonomy" id="7227"/>
    <lineage>
        <taxon>Eukaryota</taxon>
        <taxon>Metazoa</taxon>
        <taxon>Ecdysozoa</taxon>
        <taxon>Arthropoda</taxon>
        <taxon>Hexapoda</taxon>
        <taxon>Insecta</taxon>
        <taxon>Pterygota</taxon>
        <taxon>Neoptera</taxon>
        <taxon>Endopterygota</taxon>
        <taxon>Diptera</taxon>
        <taxon>Brachycera</taxon>
        <taxon>Muscomorpha</taxon>
        <taxon>Ephydroidea</taxon>
        <taxon>Drosophilidae</taxon>
        <taxon>Drosophila</taxon>
        <taxon>Sophophora</taxon>
    </lineage>
</organism>